<reference key="1">
    <citation type="journal article" date="2002" name="Genome Res.">
        <title>A complete sequence of the T. tengcongensis genome.</title>
        <authorList>
            <person name="Bao Q."/>
            <person name="Tian Y."/>
            <person name="Li W."/>
            <person name="Xu Z."/>
            <person name="Xuan Z."/>
            <person name="Hu S."/>
            <person name="Dong W."/>
            <person name="Yang J."/>
            <person name="Chen Y."/>
            <person name="Xue Y."/>
            <person name="Xu Y."/>
            <person name="Lai X."/>
            <person name="Huang L."/>
            <person name="Dong X."/>
            <person name="Ma Y."/>
            <person name="Ling L."/>
            <person name="Tan H."/>
            <person name="Chen R."/>
            <person name="Wang J."/>
            <person name="Yu J."/>
            <person name="Yang H."/>
        </authorList>
    </citation>
    <scope>NUCLEOTIDE SEQUENCE [LARGE SCALE GENOMIC DNA]</scope>
    <source>
        <strain>DSM 15242 / JCM 11007 / NBRC 100824 / MB4</strain>
    </source>
</reference>
<evidence type="ECO:0000255" key="1">
    <source>
        <dbReference type="HAMAP-Rule" id="MF_00141"/>
    </source>
</evidence>
<sequence>MIAAGDFRKGVTIEVDGQIFTVVDFMHVKPGKGAAFVRTKLKNIMTGAVIERTFSPTEKFEEAQIERREMQYLYNDGEFYYFMDTETYEQIPLSYDKVEEAMKYIKENMIVTVKFYKGEAFSVEPPTFVELEVIDTEPGVRGDTVTGGSKPATVETGAVIQVPLFINVGDKIKIDTRTGEYIERV</sequence>
<gene>
    <name evidence="1" type="primary">efp</name>
    <name type="ordered locus">TTE1281</name>
</gene>
<keyword id="KW-0963">Cytoplasm</keyword>
<keyword id="KW-0251">Elongation factor</keyword>
<keyword id="KW-0648">Protein biosynthesis</keyword>
<keyword id="KW-1185">Reference proteome</keyword>
<organism>
    <name type="scientific">Caldanaerobacter subterraneus subsp. tengcongensis (strain DSM 15242 / JCM 11007 / NBRC 100824 / MB4)</name>
    <name type="common">Thermoanaerobacter tengcongensis</name>
    <dbReference type="NCBI Taxonomy" id="273068"/>
    <lineage>
        <taxon>Bacteria</taxon>
        <taxon>Bacillati</taxon>
        <taxon>Bacillota</taxon>
        <taxon>Clostridia</taxon>
        <taxon>Thermoanaerobacterales</taxon>
        <taxon>Thermoanaerobacteraceae</taxon>
        <taxon>Caldanaerobacter</taxon>
    </lineage>
</organism>
<comment type="function">
    <text evidence="1">Involved in peptide bond synthesis. Stimulates efficient translation and peptide-bond synthesis on native or reconstituted 70S ribosomes in vitro. Probably functions indirectly by altering the affinity of the ribosome for aminoacyl-tRNA, thus increasing their reactivity as acceptors for peptidyl transferase.</text>
</comment>
<comment type="pathway">
    <text evidence="1">Protein biosynthesis; polypeptide chain elongation.</text>
</comment>
<comment type="subcellular location">
    <subcellularLocation>
        <location evidence="1">Cytoplasm</location>
    </subcellularLocation>
</comment>
<comment type="similarity">
    <text evidence="1">Belongs to the elongation factor P family.</text>
</comment>
<proteinExistence type="inferred from homology"/>
<name>EFP_CALS4</name>
<accession>Q8RAE2</accession>
<dbReference type="EMBL" id="AE008691">
    <property type="protein sequence ID" value="AAM24505.1"/>
    <property type="molecule type" value="Genomic_DNA"/>
</dbReference>
<dbReference type="RefSeq" id="WP_011025596.1">
    <property type="nucleotide sequence ID" value="NC_003869.1"/>
</dbReference>
<dbReference type="SMR" id="Q8RAE2"/>
<dbReference type="STRING" id="273068.TTE1281"/>
<dbReference type="KEGG" id="tte:TTE1281"/>
<dbReference type="eggNOG" id="COG0231">
    <property type="taxonomic scope" value="Bacteria"/>
</dbReference>
<dbReference type="HOGENOM" id="CLU_074944_0_1_9"/>
<dbReference type="OrthoDB" id="9801844at2"/>
<dbReference type="UniPathway" id="UPA00345"/>
<dbReference type="Proteomes" id="UP000000555">
    <property type="component" value="Chromosome"/>
</dbReference>
<dbReference type="GO" id="GO:0005737">
    <property type="term" value="C:cytoplasm"/>
    <property type="evidence" value="ECO:0007669"/>
    <property type="project" value="UniProtKB-SubCell"/>
</dbReference>
<dbReference type="GO" id="GO:0003746">
    <property type="term" value="F:translation elongation factor activity"/>
    <property type="evidence" value="ECO:0007669"/>
    <property type="project" value="UniProtKB-UniRule"/>
</dbReference>
<dbReference type="GO" id="GO:0043043">
    <property type="term" value="P:peptide biosynthetic process"/>
    <property type="evidence" value="ECO:0007669"/>
    <property type="project" value="InterPro"/>
</dbReference>
<dbReference type="CDD" id="cd04470">
    <property type="entry name" value="S1_EF-P_repeat_1"/>
    <property type="match status" value="1"/>
</dbReference>
<dbReference type="CDD" id="cd05794">
    <property type="entry name" value="S1_EF-P_repeat_2"/>
    <property type="match status" value="1"/>
</dbReference>
<dbReference type="FunFam" id="2.30.30.30:FF:000003">
    <property type="entry name" value="Elongation factor P"/>
    <property type="match status" value="1"/>
</dbReference>
<dbReference type="FunFam" id="2.40.50.140:FF:000004">
    <property type="entry name" value="Elongation factor P"/>
    <property type="match status" value="1"/>
</dbReference>
<dbReference type="FunFam" id="2.40.50.140:FF:000009">
    <property type="entry name" value="Elongation factor P"/>
    <property type="match status" value="1"/>
</dbReference>
<dbReference type="Gene3D" id="2.30.30.30">
    <property type="match status" value="1"/>
</dbReference>
<dbReference type="Gene3D" id="2.40.50.140">
    <property type="entry name" value="Nucleic acid-binding proteins"/>
    <property type="match status" value="2"/>
</dbReference>
<dbReference type="HAMAP" id="MF_00141">
    <property type="entry name" value="EF_P"/>
    <property type="match status" value="1"/>
</dbReference>
<dbReference type="InterPro" id="IPR015365">
    <property type="entry name" value="Elong-fact-P_C"/>
</dbReference>
<dbReference type="InterPro" id="IPR012340">
    <property type="entry name" value="NA-bd_OB-fold"/>
</dbReference>
<dbReference type="InterPro" id="IPR014722">
    <property type="entry name" value="Rib_uL2_dom2"/>
</dbReference>
<dbReference type="InterPro" id="IPR020599">
    <property type="entry name" value="Transl_elong_fac_P/YeiP"/>
</dbReference>
<dbReference type="InterPro" id="IPR013185">
    <property type="entry name" value="Transl_elong_KOW-like"/>
</dbReference>
<dbReference type="InterPro" id="IPR001059">
    <property type="entry name" value="Transl_elong_P/YeiP_cen"/>
</dbReference>
<dbReference type="InterPro" id="IPR013852">
    <property type="entry name" value="Transl_elong_P/YeiP_CS"/>
</dbReference>
<dbReference type="InterPro" id="IPR011768">
    <property type="entry name" value="Transl_elongation_fac_P"/>
</dbReference>
<dbReference type="InterPro" id="IPR008991">
    <property type="entry name" value="Translation_prot_SH3-like_sf"/>
</dbReference>
<dbReference type="NCBIfam" id="TIGR00038">
    <property type="entry name" value="efp"/>
    <property type="match status" value="1"/>
</dbReference>
<dbReference type="NCBIfam" id="NF001810">
    <property type="entry name" value="PRK00529.1"/>
    <property type="match status" value="1"/>
</dbReference>
<dbReference type="PANTHER" id="PTHR30053">
    <property type="entry name" value="ELONGATION FACTOR P"/>
    <property type="match status" value="1"/>
</dbReference>
<dbReference type="PANTHER" id="PTHR30053:SF12">
    <property type="entry name" value="ELONGATION FACTOR P (EF-P) FAMILY PROTEIN"/>
    <property type="match status" value="1"/>
</dbReference>
<dbReference type="Pfam" id="PF01132">
    <property type="entry name" value="EFP"/>
    <property type="match status" value="1"/>
</dbReference>
<dbReference type="Pfam" id="PF08207">
    <property type="entry name" value="EFP_N"/>
    <property type="match status" value="1"/>
</dbReference>
<dbReference type="Pfam" id="PF09285">
    <property type="entry name" value="Elong-fact-P_C"/>
    <property type="match status" value="1"/>
</dbReference>
<dbReference type="PIRSF" id="PIRSF005901">
    <property type="entry name" value="EF-P"/>
    <property type="match status" value="1"/>
</dbReference>
<dbReference type="SMART" id="SM01185">
    <property type="entry name" value="EFP"/>
    <property type="match status" value="1"/>
</dbReference>
<dbReference type="SMART" id="SM00841">
    <property type="entry name" value="Elong-fact-P_C"/>
    <property type="match status" value="1"/>
</dbReference>
<dbReference type="SUPFAM" id="SSF50249">
    <property type="entry name" value="Nucleic acid-binding proteins"/>
    <property type="match status" value="2"/>
</dbReference>
<dbReference type="SUPFAM" id="SSF50104">
    <property type="entry name" value="Translation proteins SH3-like domain"/>
    <property type="match status" value="1"/>
</dbReference>
<dbReference type="PROSITE" id="PS01275">
    <property type="entry name" value="EFP"/>
    <property type="match status" value="1"/>
</dbReference>
<feature type="chain" id="PRO_0000094358" description="Elongation factor P">
    <location>
        <begin position="1"/>
        <end position="185"/>
    </location>
</feature>
<protein>
    <recommendedName>
        <fullName evidence="1">Elongation factor P</fullName>
        <shortName evidence="1">EF-P</shortName>
    </recommendedName>
</protein>